<sequence length="281" mass="29758">MKSLTLKAPAKVNYRLDVLRRRPDGYHDLRMIMQRIDLCDEITITLSDTSGVRVTCGREGVPDGPENIAWRAANALLALSGLETGIDIAITKNIPVAAGLGGGSSDAATVLLGVNELLGLGLSIERLMEVGVTLGADVPFFVFGKTALAEGIGEVLTAIDAVPPLWLVIVNPNIPVSTAWVYQSLRLTGEWNGDTIPRFFKDVADVCAVLANDLELVTIERYPVIGEIKERLVAAGAAGALMSGSGPTVFGLFASEEEARGAAQSITNSSDWFVVAVRALV</sequence>
<organism>
    <name type="scientific">Geobacter metallireducens (strain ATCC 53774 / DSM 7210 / GS-15)</name>
    <dbReference type="NCBI Taxonomy" id="269799"/>
    <lineage>
        <taxon>Bacteria</taxon>
        <taxon>Pseudomonadati</taxon>
        <taxon>Thermodesulfobacteriota</taxon>
        <taxon>Desulfuromonadia</taxon>
        <taxon>Geobacterales</taxon>
        <taxon>Geobacteraceae</taxon>
        <taxon>Geobacter</taxon>
    </lineage>
</organism>
<evidence type="ECO:0000255" key="1">
    <source>
        <dbReference type="HAMAP-Rule" id="MF_00061"/>
    </source>
</evidence>
<protein>
    <recommendedName>
        <fullName evidence="1">4-diphosphocytidyl-2-C-methyl-D-erythritol kinase</fullName>
        <shortName evidence="1">CMK</shortName>
        <ecNumber evidence="1">2.7.1.148</ecNumber>
    </recommendedName>
    <alternativeName>
        <fullName evidence="1">4-(cytidine-5'-diphospho)-2-C-methyl-D-erythritol kinase</fullName>
    </alternativeName>
</protein>
<accession>Q39RQ7</accession>
<gene>
    <name evidence="1" type="primary">ispE</name>
    <name type="ordered locus">Gmet_2849</name>
</gene>
<feature type="chain" id="PRO_0000235095" description="4-diphosphocytidyl-2-C-methyl-D-erythritol kinase">
    <location>
        <begin position="1"/>
        <end position="281"/>
    </location>
</feature>
<feature type="active site" evidence="1">
    <location>
        <position position="11"/>
    </location>
</feature>
<feature type="active site" evidence="1">
    <location>
        <position position="137"/>
    </location>
</feature>
<feature type="binding site" evidence="1">
    <location>
        <begin position="95"/>
        <end position="105"/>
    </location>
    <ligand>
        <name>ATP</name>
        <dbReference type="ChEBI" id="CHEBI:30616"/>
    </ligand>
</feature>
<proteinExistence type="inferred from homology"/>
<keyword id="KW-0067">ATP-binding</keyword>
<keyword id="KW-0414">Isoprene biosynthesis</keyword>
<keyword id="KW-0418">Kinase</keyword>
<keyword id="KW-0547">Nucleotide-binding</keyword>
<keyword id="KW-1185">Reference proteome</keyword>
<keyword id="KW-0808">Transferase</keyword>
<dbReference type="EC" id="2.7.1.148" evidence="1"/>
<dbReference type="EMBL" id="CP000148">
    <property type="protein sequence ID" value="ABB33067.1"/>
    <property type="molecule type" value="Genomic_DNA"/>
</dbReference>
<dbReference type="RefSeq" id="WP_004514567.1">
    <property type="nucleotide sequence ID" value="NC_007517.1"/>
</dbReference>
<dbReference type="SMR" id="Q39RQ7"/>
<dbReference type="STRING" id="269799.Gmet_2849"/>
<dbReference type="KEGG" id="gme:Gmet_2849"/>
<dbReference type="eggNOG" id="COG1947">
    <property type="taxonomic scope" value="Bacteria"/>
</dbReference>
<dbReference type="HOGENOM" id="CLU_053057_1_1_7"/>
<dbReference type="UniPathway" id="UPA00056">
    <property type="reaction ID" value="UER00094"/>
</dbReference>
<dbReference type="Proteomes" id="UP000007073">
    <property type="component" value="Chromosome"/>
</dbReference>
<dbReference type="GO" id="GO:0050515">
    <property type="term" value="F:4-(cytidine 5'-diphospho)-2-C-methyl-D-erythritol kinase activity"/>
    <property type="evidence" value="ECO:0007669"/>
    <property type="project" value="UniProtKB-UniRule"/>
</dbReference>
<dbReference type="GO" id="GO:0005524">
    <property type="term" value="F:ATP binding"/>
    <property type="evidence" value="ECO:0007669"/>
    <property type="project" value="UniProtKB-UniRule"/>
</dbReference>
<dbReference type="GO" id="GO:0019288">
    <property type="term" value="P:isopentenyl diphosphate biosynthetic process, methylerythritol 4-phosphate pathway"/>
    <property type="evidence" value="ECO:0007669"/>
    <property type="project" value="UniProtKB-UniRule"/>
</dbReference>
<dbReference type="GO" id="GO:0016114">
    <property type="term" value="P:terpenoid biosynthetic process"/>
    <property type="evidence" value="ECO:0007669"/>
    <property type="project" value="InterPro"/>
</dbReference>
<dbReference type="Gene3D" id="3.30.230.10">
    <property type="match status" value="1"/>
</dbReference>
<dbReference type="Gene3D" id="3.30.70.890">
    <property type="entry name" value="GHMP kinase, C-terminal domain"/>
    <property type="match status" value="1"/>
</dbReference>
<dbReference type="HAMAP" id="MF_00061">
    <property type="entry name" value="IspE"/>
    <property type="match status" value="1"/>
</dbReference>
<dbReference type="InterPro" id="IPR013750">
    <property type="entry name" value="GHMP_kinase_C_dom"/>
</dbReference>
<dbReference type="InterPro" id="IPR036554">
    <property type="entry name" value="GHMP_kinase_C_sf"/>
</dbReference>
<dbReference type="InterPro" id="IPR006204">
    <property type="entry name" value="GHMP_kinase_N_dom"/>
</dbReference>
<dbReference type="InterPro" id="IPR004424">
    <property type="entry name" value="IspE"/>
</dbReference>
<dbReference type="InterPro" id="IPR020568">
    <property type="entry name" value="Ribosomal_Su5_D2-typ_SF"/>
</dbReference>
<dbReference type="InterPro" id="IPR014721">
    <property type="entry name" value="Ribsml_uS5_D2-typ_fold_subgr"/>
</dbReference>
<dbReference type="NCBIfam" id="TIGR00154">
    <property type="entry name" value="ispE"/>
    <property type="match status" value="1"/>
</dbReference>
<dbReference type="NCBIfam" id="NF011202">
    <property type="entry name" value="PRK14608.1"/>
    <property type="match status" value="1"/>
</dbReference>
<dbReference type="PANTHER" id="PTHR43527">
    <property type="entry name" value="4-DIPHOSPHOCYTIDYL-2-C-METHYL-D-ERYTHRITOL KINASE, CHLOROPLASTIC"/>
    <property type="match status" value="1"/>
</dbReference>
<dbReference type="PANTHER" id="PTHR43527:SF2">
    <property type="entry name" value="4-DIPHOSPHOCYTIDYL-2-C-METHYL-D-ERYTHRITOL KINASE, CHLOROPLASTIC"/>
    <property type="match status" value="1"/>
</dbReference>
<dbReference type="Pfam" id="PF08544">
    <property type="entry name" value="GHMP_kinases_C"/>
    <property type="match status" value="1"/>
</dbReference>
<dbReference type="Pfam" id="PF00288">
    <property type="entry name" value="GHMP_kinases_N"/>
    <property type="match status" value="1"/>
</dbReference>
<dbReference type="PIRSF" id="PIRSF010376">
    <property type="entry name" value="IspE"/>
    <property type="match status" value="1"/>
</dbReference>
<dbReference type="SUPFAM" id="SSF55060">
    <property type="entry name" value="GHMP Kinase, C-terminal domain"/>
    <property type="match status" value="1"/>
</dbReference>
<dbReference type="SUPFAM" id="SSF54211">
    <property type="entry name" value="Ribosomal protein S5 domain 2-like"/>
    <property type="match status" value="1"/>
</dbReference>
<comment type="function">
    <text evidence="1">Catalyzes the phosphorylation of the position 2 hydroxy group of 4-diphosphocytidyl-2C-methyl-D-erythritol.</text>
</comment>
<comment type="catalytic activity">
    <reaction evidence="1">
        <text>4-CDP-2-C-methyl-D-erythritol + ATP = 4-CDP-2-C-methyl-D-erythritol 2-phosphate + ADP + H(+)</text>
        <dbReference type="Rhea" id="RHEA:18437"/>
        <dbReference type="ChEBI" id="CHEBI:15378"/>
        <dbReference type="ChEBI" id="CHEBI:30616"/>
        <dbReference type="ChEBI" id="CHEBI:57823"/>
        <dbReference type="ChEBI" id="CHEBI:57919"/>
        <dbReference type="ChEBI" id="CHEBI:456216"/>
        <dbReference type="EC" id="2.7.1.148"/>
    </reaction>
</comment>
<comment type="pathway">
    <text evidence="1">Isoprenoid biosynthesis; isopentenyl diphosphate biosynthesis via DXP pathway; isopentenyl diphosphate from 1-deoxy-D-xylulose 5-phosphate: step 3/6.</text>
</comment>
<comment type="similarity">
    <text evidence="1">Belongs to the GHMP kinase family. IspE subfamily.</text>
</comment>
<name>ISPE_GEOMG</name>
<reference key="1">
    <citation type="journal article" date="2009" name="BMC Microbiol.">
        <title>The genome sequence of Geobacter metallireducens: features of metabolism, physiology and regulation common and dissimilar to Geobacter sulfurreducens.</title>
        <authorList>
            <person name="Aklujkar M."/>
            <person name="Krushkal J."/>
            <person name="DiBartolo G."/>
            <person name="Lapidus A."/>
            <person name="Land M.L."/>
            <person name="Lovley D.R."/>
        </authorList>
    </citation>
    <scope>NUCLEOTIDE SEQUENCE [LARGE SCALE GENOMIC DNA]</scope>
    <source>
        <strain>ATCC 53774 / DSM 7210 / GS-15</strain>
    </source>
</reference>